<comment type="subcellular location">
    <subcellularLocation>
        <location evidence="1">Cell inner membrane</location>
        <topology evidence="1">Multi-pass membrane protein</topology>
    </subcellularLocation>
</comment>
<keyword id="KW-0997">Cell inner membrane</keyword>
<keyword id="KW-1003">Cell membrane</keyword>
<keyword id="KW-0472">Membrane</keyword>
<keyword id="KW-0560">Oxidoreductase</keyword>
<keyword id="KW-1185">Reference proteome</keyword>
<keyword id="KW-0812">Transmembrane</keyword>
<keyword id="KW-1133">Transmembrane helix</keyword>
<protein>
    <recommendedName>
        <fullName>Hydrogenase-4 component E</fullName>
        <ecNumber>1.-.-.-</ecNumber>
    </recommendedName>
</protein>
<evidence type="ECO:0000250" key="1"/>
<evidence type="ECO:0000255" key="2"/>
<organism>
    <name type="scientific">Shigella flexneri</name>
    <dbReference type="NCBI Taxonomy" id="623"/>
    <lineage>
        <taxon>Bacteria</taxon>
        <taxon>Pseudomonadati</taxon>
        <taxon>Pseudomonadota</taxon>
        <taxon>Gammaproteobacteria</taxon>
        <taxon>Enterobacterales</taxon>
        <taxon>Enterobacteriaceae</taxon>
        <taxon>Shigella</taxon>
    </lineage>
</organism>
<accession>P0AEW3</accession>
<accession>P77524</accession>
<reference key="1">
    <citation type="journal article" date="2002" name="Nucleic Acids Res.">
        <title>Genome sequence of Shigella flexneri 2a: insights into pathogenicity through comparison with genomes of Escherichia coli K12 and O157.</title>
        <authorList>
            <person name="Jin Q."/>
            <person name="Yuan Z."/>
            <person name="Xu J."/>
            <person name="Wang Y."/>
            <person name="Shen Y."/>
            <person name="Lu W."/>
            <person name="Wang J."/>
            <person name="Liu H."/>
            <person name="Yang J."/>
            <person name="Yang F."/>
            <person name="Zhang X."/>
            <person name="Zhang J."/>
            <person name="Yang G."/>
            <person name="Wu H."/>
            <person name="Qu D."/>
            <person name="Dong J."/>
            <person name="Sun L."/>
            <person name="Xue Y."/>
            <person name="Zhao A."/>
            <person name="Gao Y."/>
            <person name="Zhu J."/>
            <person name="Kan B."/>
            <person name="Ding K."/>
            <person name="Chen S."/>
            <person name="Cheng H."/>
            <person name="Yao Z."/>
            <person name="He B."/>
            <person name="Chen R."/>
            <person name="Ma D."/>
            <person name="Qiang B."/>
            <person name="Wen Y."/>
            <person name="Hou Y."/>
            <person name="Yu J."/>
        </authorList>
    </citation>
    <scope>NUCLEOTIDE SEQUENCE [LARGE SCALE GENOMIC DNA]</scope>
    <source>
        <strain>301 / Serotype 2a</strain>
    </source>
</reference>
<reference key="2">
    <citation type="journal article" date="2003" name="Infect. Immun.">
        <title>Complete genome sequence and comparative genomics of Shigella flexneri serotype 2a strain 2457T.</title>
        <authorList>
            <person name="Wei J."/>
            <person name="Goldberg M.B."/>
            <person name="Burland V."/>
            <person name="Venkatesan M.M."/>
            <person name="Deng W."/>
            <person name="Fournier G."/>
            <person name="Mayhew G.F."/>
            <person name="Plunkett G. III"/>
            <person name="Rose D.J."/>
            <person name="Darling A."/>
            <person name="Mau B."/>
            <person name="Perna N.T."/>
            <person name="Payne S.M."/>
            <person name="Runyen-Janecky L.J."/>
            <person name="Zhou S."/>
            <person name="Schwartz D.C."/>
            <person name="Blattner F.R."/>
        </authorList>
    </citation>
    <scope>NUCLEOTIDE SEQUENCE [LARGE SCALE GENOMIC DNA]</scope>
    <source>
        <strain>ATCC 700930 / 2457T / Serotype 2a</strain>
    </source>
</reference>
<proteinExistence type="inferred from homology"/>
<name>HYFE_SHIFL</name>
<sequence length="216" mass="23361">MTGSMIVNNLAGLMMLTSLFVISVKSYRLSCGFYACQSLVLVSIFATLSCLFAAEQLLIWSASAFITKVLLVPLIMTYAARNIPQNIPEKALFGPAMMALLAALIVLLCAFVVQPVKLPMATGLKPALAVALGHFLLGLLCIVSQRNILRQIFGYCLMENGSHLVLALLAWRAPELVEIGIATDAIFAVIVMVLLARKIWRTHGTLDVNNLTALKG</sequence>
<gene>
    <name type="primary">hyfE</name>
    <name type="ordered locus">SF2528</name>
    <name type="ordered locus">S2678</name>
</gene>
<feature type="chain" id="PRO_0000084117" description="Hydrogenase-4 component E">
    <location>
        <begin position="1"/>
        <end position="216"/>
    </location>
</feature>
<feature type="topological domain" description="Periplasmic" evidence="2">
    <location>
        <begin position="1"/>
        <end position="3"/>
    </location>
</feature>
<feature type="transmembrane region" description="Helical" evidence="2">
    <location>
        <begin position="4"/>
        <end position="24"/>
    </location>
</feature>
<feature type="topological domain" description="Cytoplasmic" evidence="2">
    <location>
        <begin position="25"/>
        <end position="38"/>
    </location>
</feature>
<feature type="transmembrane region" description="Helical" evidence="2">
    <location>
        <begin position="39"/>
        <end position="59"/>
    </location>
</feature>
<feature type="transmembrane region" description="Helical" evidence="2">
    <location>
        <begin position="60"/>
        <end position="80"/>
    </location>
</feature>
<feature type="topological domain" description="Cytoplasmic" evidence="2">
    <location>
        <begin position="81"/>
        <end position="92"/>
    </location>
</feature>
<feature type="transmembrane region" description="Helical" evidence="2">
    <location>
        <begin position="93"/>
        <end position="113"/>
    </location>
</feature>
<feature type="topological domain" description="Periplasmic" evidence="2">
    <location>
        <begin position="114"/>
        <end position="122"/>
    </location>
</feature>
<feature type="transmembrane region" description="Helical" evidence="2">
    <location>
        <begin position="123"/>
        <end position="143"/>
    </location>
</feature>
<feature type="topological domain" description="Cytoplasmic" evidence="2">
    <location>
        <begin position="144"/>
        <end position="150"/>
    </location>
</feature>
<feature type="transmembrane region" description="Helical" evidence="2">
    <location>
        <begin position="151"/>
        <end position="171"/>
    </location>
</feature>
<feature type="topological domain" description="Periplasmic" evidence="2">
    <location>
        <begin position="172"/>
        <end position="175"/>
    </location>
</feature>
<feature type="transmembrane region" description="Helical" evidence="2">
    <location>
        <begin position="176"/>
        <end position="196"/>
    </location>
</feature>
<feature type="topological domain" description="Cytoplasmic" evidence="2">
    <location>
        <begin position="197"/>
        <end position="216"/>
    </location>
</feature>
<dbReference type="EC" id="1.-.-.-"/>
<dbReference type="EMBL" id="AE005674">
    <property type="protein sequence ID" value="AAN44030.1"/>
    <property type="molecule type" value="Genomic_DNA"/>
</dbReference>
<dbReference type="EMBL" id="AE014073">
    <property type="protein sequence ID" value="AAP17843.1"/>
    <property type="molecule type" value="Genomic_DNA"/>
</dbReference>
<dbReference type="RefSeq" id="NP_708323.1">
    <property type="nucleotide sequence ID" value="NC_004337.2"/>
</dbReference>
<dbReference type="RefSeq" id="WP_000147987.1">
    <property type="nucleotide sequence ID" value="NZ_UIPU01000001.1"/>
</dbReference>
<dbReference type="SMR" id="P0AEW3"/>
<dbReference type="STRING" id="198214.SF2528"/>
<dbReference type="PaxDb" id="198214-SF2528"/>
<dbReference type="GeneID" id="1025165"/>
<dbReference type="GeneID" id="93774653"/>
<dbReference type="KEGG" id="sfl:SF2528"/>
<dbReference type="KEGG" id="sfx:S2678"/>
<dbReference type="PATRIC" id="fig|198214.7.peg.3022"/>
<dbReference type="HOGENOM" id="CLU_088957_2_0_6"/>
<dbReference type="Proteomes" id="UP000001006">
    <property type="component" value="Chromosome"/>
</dbReference>
<dbReference type="Proteomes" id="UP000002673">
    <property type="component" value="Chromosome"/>
</dbReference>
<dbReference type="GO" id="GO:0005886">
    <property type="term" value="C:plasma membrane"/>
    <property type="evidence" value="ECO:0007669"/>
    <property type="project" value="UniProtKB-SubCell"/>
</dbReference>
<dbReference type="GO" id="GO:0016491">
    <property type="term" value="F:oxidoreductase activity"/>
    <property type="evidence" value="ECO:0007669"/>
    <property type="project" value="UniProtKB-KW"/>
</dbReference>
<dbReference type="FunFam" id="1.10.287.3510:FF:000005">
    <property type="entry name" value="Hydrogenase 4, membrane subunit"/>
    <property type="match status" value="1"/>
</dbReference>
<dbReference type="Gene3D" id="1.10.287.3510">
    <property type="match status" value="1"/>
</dbReference>
<dbReference type="InterPro" id="IPR038730">
    <property type="entry name" value="HyfE-like"/>
</dbReference>
<dbReference type="InterPro" id="IPR039428">
    <property type="entry name" value="NUOK/Mnh_C1-like"/>
</dbReference>
<dbReference type="NCBIfam" id="NF008556">
    <property type="entry name" value="PRK11492.1"/>
    <property type="match status" value="1"/>
</dbReference>
<dbReference type="PANTHER" id="PTHR38601">
    <property type="entry name" value="HYDROGENASE-4 COMPONENT E"/>
    <property type="match status" value="1"/>
</dbReference>
<dbReference type="PANTHER" id="PTHR38601:SF1">
    <property type="entry name" value="HYDROGENASE-4 COMPONENT E"/>
    <property type="match status" value="1"/>
</dbReference>
<dbReference type="Pfam" id="PF00420">
    <property type="entry name" value="Oxidored_q2"/>
    <property type="match status" value="1"/>
</dbReference>